<accession>Q2V4J5</accession>
<comment type="subcellular location">
    <subcellularLocation>
        <location evidence="1">Secreted</location>
    </subcellularLocation>
</comment>
<comment type="similarity">
    <text evidence="3">Belongs to the DEFL family.</text>
</comment>
<protein>
    <recommendedName>
        <fullName>Defensin-like protein 43</fullName>
    </recommendedName>
</protein>
<organism>
    <name type="scientific">Arabidopsis thaliana</name>
    <name type="common">Mouse-ear cress</name>
    <dbReference type="NCBI Taxonomy" id="3702"/>
    <lineage>
        <taxon>Eukaryota</taxon>
        <taxon>Viridiplantae</taxon>
        <taxon>Streptophyta</taxon>
        <taxon>Embryophyta</taxon>
        <taxon>Tracheophyta</taxon>
        <taxon>Spermatophyta</taxon>
        <taxon>Magnoliopsida</taxon>
        <taxon>eudicotyledons</taxon>
        <taxon>Gunneridae</taxon>
        <taxon>Pentapetalae</taxon>
        <taxon>rosids</taxon>
        <taxon>malvids</taxon>
        <taxon>Brassicales</taxon>
        <taxon>Brassicaceae</taxon>
        <taxon>Camelineae</taxon>
        <taxon>Arabidopsis</taxon>
    </lineage>
</organism>
<reference key="1">
    <citation type="journal article" date="2000" name="Nature">
        <title>Sequence and analysis of chromosome 1 of the plant Arabidopsis thaliana.</title>
        <authorList>
            <person name="Theologis A."/>
            <person name="Ecker J.R."/>
            <person name="Palm C.J."/>
            <person name="Federspiel N.A."/>
            <person name="Kaul S."/>
            <person name="White O."/>
            <person name="Alonso J."/>
            <person name="Altafi H."/>
            <person name="Araujo R."/>
            <person name="Bowman C.L."/>
            <person name="Brooks S.Y."/>
            <person name="Buehler E."/>
            <person name="Chan A."/>
            <person name="Chao Q."/>
            <person name="Chen H."/>
            <person name="Cheuk R.F."/>
            <person name="Chin C.W."/>
            <person name="Chung M.K."/>
            <person name="Conn L."/>
            <person name="Conway A.B."/>
            <person name="Conway A.R."/>
            <person name="Creasy T.H."/>
            <person name="Dewar K."/>
            <person name="Dunn P."/>
            <person name="Etgu P."/>
            <person name="Feldblyum T.V."/>
            <person name="Feng J.-D."/>
            <person name="Fong B."/>
            <person name="Fujii C.Y."/>
            <person name="Gill J.E."/>
            <person name="Goldsmith A.D."/>
            <person name="Haas B."/>
            <person name="Hansen N.F."/>
            <person name="Hughes B."/>
            <person name="Huizar L."/>
            <person name="Hunter J.L."/>
            <person name="Jenkins J."/>
            <person name="Johnson-Hopson C."/>
            <person name="Khan S."/>
            <person name="Khaykin E."/>
            <person name="Kim C.J."/>
            <person name="Koo H.L."/>
            <person name="Kremenetskaia I."/>
            <person name="Kurtz D.B."/>
            <person name="Kwan A."/>
            <person name="Lam B."/>
            <person name="Langin-Hooper S."/>
            <person name="Lee A."/>
            <person name="Lee J.M."/>
            <person name="Lenz C.A."/>
            <person name="Li J.H."/>
            <person name="Li Y.-P."/>
            <person name="Lin X."/>
            <person name="Liu S.X."/>
            <person name="Liu Z.A."/>
            <person name="Luros J.S."/>
            <person name="Maiti R."/>
            <person name="Marziali A."/>
            <person name="Militscher J."/>
            <person name="Miranda M."/>
            <person name="Nguyen M."/>
            <person name="Nierman W.C."/>
            <person name="Osborne B.I."/>
            <person name="Pai G."/>
            <person name="Peterson J."/>
            <person name="Pham P.K."/>
            <person name="Rizzo M."/>
            <person name="Rooney T."/>
            <person name="Rowley D."/>
            <person name="Sakano H."/>
            <person name="Salzberg S.L."/>
            <person name="Schwartz J.R."/>
            <person name="Shinn P."/>
            <person name="Southwick A.M."/>
            <person name="Sun H."/>
            <person name="Tallon L.J."/>
            <person name="Tambunga G."/>
            <person name="Toriumi M.J."/>
            <person name="Town C.D."/>
            <person name="Utterback T."/>
            <person name="Van Aken S."/>
            <person name="Vaysberg M."/>
            <person name="Vysotskaia V.S."/>
            <person name="Walker M."/>
            <person name="Wu D."/>
            <person name="Yu G."/>
            <person name="Fraser C.M."/>
            <person name="Venter J.C."/>
            <person name="Davis R.W."/>
        </authorList>
    </citation>
    <scope>NUCLEOTIDE SEQUENCE [LARGE SCALE GENOMIC DNA]</scope>
    <source>
        <strain>cv. Columbia</strain>
    </source>
</reference>
<reference key="2">
    <citation type="journal article" date="2017" name="Plant J.">
        <title>Araport11: a complete reannotation of the Arabidopsis thaliana reference genome.</title>
        <authorList>
            <person name="Cheng C.Y."/>
            <person name="Krishnakumar V."/>
            <person name="Chan A.P."/>
            <person name="Thibaud-Nissen F."/>
            <person name="Schobel S."/>
            <person name="Town C.D."/>
        </authorList>
    </citation>
    <scope>GENOME REANNOTATION</scope>
    <source>
        <strain>cv. Columbia</strain>
    </source>
</reference>
<reference key="3">
    <citation type="journal article" date="2007" name="Plant J.">
        <title>Small cysteine-rich peptides resembling antimicrobial peptides have been under-predicted in plants.</title>
        <authorList>
            <person name="Silverstein K.A.T."/>
            <person name="Moskal W.A. Jr."/>
            <person name="Wu H.C."/>
            <person name="Underwood B.A."/>
            <person name="Graham M.A."/>
            <person name="Town C.D."/>
            <person name="VandenBosch K.A."/>
        </authorList>
    </citation>
    <scope>NUCLEOTIDE SEQUENCE [LARGE SCALE MRNA] OF 46-81</scope>
    <source>
        <strain>cv. Columbia</strain>
    </source>
</reference>
<reference key="4">
    <citation type="journal article" date="2005" name="Plant Physiol.">
        <title>Genome organization of more than 300 defensin-like genes in Arabidopsis.</title>
        <authorList>
            <person name="Silverstein K.A.T."/>
            <person name="Graham M.A."/>
            <person name="Paape T.D."/>
            <person name="VandenBosch K.A."/>
        </authorList>
    </citation>
    <scope>GENE FAMILY</scope>
</reference>
<feature type="signal peptide" evidence="2">
    <location>
        <begin position="1"/>
        <end position="27"/>
    </location>
</feature>
<feature type="chain" id="PRO_0000379625" description="Defensin-like protein 43">
    <location>
        <begin position="28"/>
        <end position="81"/>
    </location>
</feature>
<feature type="disulfide bond" evidence="1">
    <location>
        <begin position="40"/>
        <end position="79"/>
    </location>
</feature>
<feature type="disulfide bond" evidence="1">
    <location>
        <begin position="44"/>
        <end position="67"/>
    </location>
</feature>
<feature type="disulfide bond" evidence="1">
    <location>
        <begin position="53"/>
        <end position="77"/>
    </location>
</feature>
<feature type="disulfide bond" evidence="1">
    <location>
        <begin position="57"/>
        <end position="78"/>
    </location>
</feature>
<sequence>MGITKTSVTFLFLLILAAFVSNYNVLASEIKPTGRIDDQCKQMCSATYGDGKCASDCRKAGFSSGRCLTSSPFGNKCCCTK</sequence>
<proteinExistence type="inferred from homology"/>
<name>DEF43_ARATH</name>
<gene>
    <name type="ordered locus">At1g32763</name>
    <name type="ORF">F6N18</name>
</gene>
<evidence type="ECO:0000250" key="1"/>
<evidence type="ECO:0000255" key="2"/>
<evidence type="ECO:0000305" key="3"/>
<dbReference type="EMBL" id="AC017118">
    <property type="status" value="NOT_ANNOTATED_CDS"/>
    <property type="molecule type" value="Genomic_DNA"/>
</dbReference>
<dbReference type="EMBL" id="CP002684">
    <property type="protein sequence ID" value="AEE31526.1"/>
    <property type="molecule type" value="Genomic_DNA"/>
</dbReference>
<dbReference type="EMBL" id="EF182836">
    <property type="status" value="NOT_ANNOTATED_CDS"/>
    <property type="molecule type" value="mRNA"/>
</dbReference>
<dbReference type="RefSeq" id="NP_001031130.1">
    <property type="nucleotide sequence ID" value="NM_001036053.2"/>
</dbReference>
<dbReference type="SMR" id="Q2V4J5"/>
<dbReference type="STRING" id="3702.Q2V4J5"/>
<dbReference type="PaxDb" id="3702-AT1G32763.1"/>
<dbReference type="ProteomicsDB" id="223992"/>
<dbReference type="EnsemblPlants" id="AT1G32763.1">
    <property type="protein sequence ID" value="AT1G32763.1"/>
    <property type="gene ID" value="AT1G32763"/>
</dbReference>
<dbReference type="GeneID" id="3766883"/>
<dbReference type="Gramene" id="AT1G32763.1">
    <property type="protein sequence ID" value="AT1G32763.1"/>
    <property type="gene ID" value="AT1G32763"/>
</dbReference>
<dbReference type="KEGG" id="ath:AT1G32763"/>
<dbReference type="Araport" id="AT1G32763"/>
<dbReference type="TAIR" id="AT1G32763"/>
<dbReference type="HOGENOM" id="CLU_165205_1_0_1"/>
<dbReference type="InParanoid" id="Q2V4J5"/>
<dbReference type="OMA" id="KQMCSAT"/>
<dbReference type="PhylomeDB" id="Q2V4J5"/>
<dbReference type="PRO" id="PR:Q2V4J5"/>
<dbReference type="Proteomes" id="UP000006548">
    <property type="component" value="Chromosome 1"/>
</dbReference>
<dbReference type="ExpressionAtlas" id="Q2V4J5">
    <property type="expression patterns" value="baseline"/>
</dbReference>
<dbReference type="GO" id="GO:0005576">
    <property type="term" value="C:extracellular region"/>
    <property type="evidence" value="ECO:0007669"/>
    <property type="project" value="UniProtKB-SubCell"/>
</dbReference>
<dbReference type="GO" id="GO:0050832">
    <property type="term" value="P:defense response to fungus"/>
    <property type="evidence" value="ECO:0007669"/>
    <property type="project" value="UniProtKB-KW"/>
</dbReference>
<dbReference type="GO" id="GO:0031640">
    <property type="term" value="P:killing of cells of another organism"/>
    <property type="evidence" value="ECO:0007669"/>
    <property type="project" value="UniProtKB-KW"/>
</dbReference>
<dbReference type="InterPro" id="IPR056373">
    <property type="entry name" value="Defensin-like_dom"/>
</dbReference>
<dbReference type="Pfam" id="PF24552">
    <property type="entry name" value="Defensin"/>
    <property type="match status" value="1"/>
</dbReference>
<keyword id="KW-0929">Antimicrobial</keyword>
<keyword id="KW-1015">Disulfide bond</keyword>
<keyword id="KW-0295">Fungicide</keyword>
<keyword id="KW-0611">Plant defense</keyword>
<keyword id="KW-1185">Reference proteome</keyword>
<keyword id="KW-0964">Secreted</keyword>
<keyword id="KW-0732">Signal</keyword>